<gene>
    <name type="primary">Dars1</name>
    <name type="synonym">Dars</name>
</gene>
<keyword id="KW-0007">Acetylation</keyword>
<keyword id="KW-0030">Aminoacyl-tRNA synthetase</keyword>
<keyword id="KW-0067">ATP-binding</keyword>
<keyword id="KW-0963">Cytoplasm</keyword>
<keyword id="KW-0436">Ligase</keyword>
<keyword id="KW-0547">Nucleotide-binding</keyword>
<keyword id="KW-0597">Phosphoprotein</keyword>
<keyword id="KW-0648">Protein biosynthesis</keyword>
<keyword id="KW-1185">Reference proteome</keyword>
<dbReference type="EC" id="6.1.1.12" evidence="3"/>
<dbReference type="EMBL" id="AK151027">
    <property type="protein sequence ID" value="BAE30045.1"/>
    <property type="molecule type" value="mRNA"/>
</dbReference>
<dbReference type="EMBL" id="AK151897">
    <property type="protein sequence ID" value="BAE30780.1"/>
    <property type="molecule type" value="mRNA"/>
</dbReference>
<dbReference type="EMBL" id="AK152304">
    <property type="protein sequence ID" value="BAE31110.1"/>
    <property type="molecule type" value="mRNA"/>
</dbReference>
<dbReference type="EMBL" id="AK152562">
    <property type="protein sequence ID" value="BAE31315.1"/>
    <property type="molecule type" value="mRNA"/>
</dbReference>
<dbReference type="EMBL" id="AK153256">
    <property type="protein sequence ID" value="BAE31847.1"/>
    <property type="molecule type" value="mRNA"/>
</dbReference>
<dbReference type="EMBL" id="AK153299">
    <property type="protein sequence ID" value="BAE31881.1"/>
    <property type="molecule type" value="mRNA"/>
</dbReference>
<dbReference type="EMBL" id="AK169716">
    <property type="protein sequence ID" value="BAE41327.1"/>
    <property type="molecule type" value="mRNA"/>
</dbReference>
<dbReference type="EMBL" id="BC008638">
    <property type="protein sequence ID" value="AAH08638.1"/>
    <property type="molecule type" value="mRNA"/>
</dbReference>
<dbReference type="CCDS" id="CCDS15253.1"/>
<dbReference type="RefSeq" id="NP_803228.2">
    <property type="nucleotide sequence ID" value="NM_177445.5"/>
</dbReference>
<dbReference type="SMR" id="Q922B2"/>
<dbReference type="BioGRID" id="230508">
    <property type="interactions" value="23"/>
</dbReference>
<dbReference type="FunCoup" id="Q922B2">
    <property type="interactions" value="2486"/>
</dbReference>
<dbReference type="IntAct" id="Q922B2">
    <property type="interactions" value="4"/>
</dbReference>
<dbReference type="STRING" id="10090.ENSMUSP00000027602"/>
<dbReference type="GlyGen" id="Q922B2">
    <property type="glycosylation" value="1 site, 1 O-linked glycan (1 site)"/>
</dbReference>
<dbReference type="iPTMnet" id="Q922B2"/>
<dbReference type="MetOSite" id="Q922B2"/>
<dbReference type="PhosphoSitePlus" id="Q922B2"/>
<dbReference type="SwissPalm" id="Q922B2"/>
<dbReference type="jPOST" id="Q922B2"/>
<dbReference type="PaxDb" id="10090-ENSMUSP00000027602"/>
<dbReference type="PeptideAtlas" id="Q922B2"/>
<dbReference type="ProteomicsDB" id="257515"/>
<dbReference type="Pumba" id="Q922B2"/>
<dbReference type="Antibodypedia" id="18737">
    <property type="antibodies" value="209 antibodies from 30 providers"/>
</dbReference>
<dbReference type="DNASU" id="226414"/>
<dbReference type="Ensembl" id="ENSMUST00000027602.15">
    <property type="protein sequence ID" value="ENSMUSP00000027602.9"/>
    <property type="gene ID" value="ENSMUSG00000026356.16"/>
</dbReference>
<dbReference type="GeneID" id="226414"/>
<dbReference type="KEGG" id="mmu:226414"/>
<dbReference type="UCSC" id="uc007clp.2">
    <property type="organism name" value="mouse"/>
</dbReference>
<dbReference type="AGR" id="MGI:2442544"/>
<dbReference type="CTD" id="1615"/>
<dbReference type="MGI" id="MGI:2442544">
    <property type="gene designation" value="Dars1"/>
</dbReference>
<dbReference type="VEuPathDB" id="HostDB:ENSMUSG00000026356"/>
<dbReference type="eggNOG" id="KOG0556">
    <property type="taxonomic scope" value="Eukaryota"/>
</dbReference>
<dbReference type="GeneTree" id="ENSGT01030000234618"/>
<dbReference type="HOGENOM" id="CLU_004553_2_1_1"/>
<dbReference type="InParanoid" id="Q922B2"/>
<dbReference type="OMA" id="WVHEIRD"/>
<dbReference type="OrthoDB" id="372395at2759"/>
<dbReference type="PhylomeDB" id="Q922B2"/>
<dbReference type="TreeFam" id="TF105676"/>
<dbReference type="BRENDA" id="6.1.1.12">
    <property type="organism ID" value="3474"/>
</dbReference>
<dbReference type="Reactome" id="R-MMU-9856649">
    <property type="pathway name" value="Transcriptional and post-translational regulation of MITF-M expression and activity"/>
</dbReference>
<dbReference type="BioGRID-ORCS" id="226414">
    <property type="hits" value="27 hits in 80 CRISPR screens"/>
</dbReference>
<dbReference type="ChiTaRS" id="Dars">
    <property type="organism name" value="mouse"/>
</dbReference>
<dbReference type="PRO" id="PR:Q922B2"/>
<dbReference type="Proteomes" id="UP000000589">
    <property type="component" value="Chromosome 1"/>
</dbReference>
<dbReference type="RNAct" id="Q922B2">
    <property type="molecule type" value="protein"/>
</dbReference>
<dbReference type="Bgee" id="ENSMUSG00000026356">
    <property type="expression patterns" value="Expressed in yolk sac and 269 other cell types or tissues"/>
</dbReference>
<dbReference type="ExpressionAtlas" id="Q922B2">
    <property type="expression patterns" value="baseline and differential"/>
</dbReference>
<dbReference type="GO" id="GO:0017101">
    <property type="term" value="C:aminoacyl-tRNA synthetase multienzyme complex"/>
    <property type="evidence" value="ECO:0000314"/>
    <property type="project" value="CAFA"/>
</dbReference>
<dbReference type="GO" id="GO:0005737">
    <property type="term" value="C:cytoplasm"/>
    <property type="evidence" value="ECO:0000314"/>
    <property type="project" value="MGI"/>
</dbReference>
<dbReference type="GO" id="GO:0005829">
    <property type="term" value="C:cytosol"/>
    <property type="evidence" value="ECO:0007669"/>
    <property type="project" value="Ensembl"/>
</dbReference>
<dbReference type="GO" id="GO:0045202">
    <property type="term" value="C:synapse"/>
    <property type="evidence" value="ECO:0000314"/>
    <property type="project" value="MGI"/>
</dbReference>
<dbReference type="GO" id="GO:0004815">
    <property type="term" value="F:aspartate-tRNA ligase activity"/>
    <property type="evidence" value="ECO:0000266"/>
    <property type="project" value="MGI"/>
</dbReference>
<dbReference type="GO" id="GO:0005524">
    <property type="term" value="F:ATP binding"/>
    <property type="evidence" value="ECO:0007669"/>
    <property type="project" value="UniProtKB-KW"/>
</dbReference>
<dbReference type="GO" id="GO:0003676">
    <property type="term" value="F:nucleic acid binding"/>
    <property type="evidence" value="ECO:0007669"/>
    <property type="project" value="InterPro"/>
</dbReference>
<dbReference type="GO" id="GO:0006422">
    <property type="term" value="P:aspartyl-tRNA aminoacylation"/>
    <property type="evidence" value="ECO:0000266"/>
    <property type="project" value="MGI"/>
</dbReference>
<dbReference type="CDD" id="cd04320">
    <property type="entry name" value="AspRS_cyto_N"/>
    <property type="match status" value="1"/>
</dbReference>
<dbReference type="CDD" id="cd00776">
    <property type="entry name" value="AsxRS_core"/>
    <property type="match status" value="1"/>
</dbReference>
<dbReference type="FunFam" id="2.40.50.140:FF:000144">
    <property type="entry name" value="Aspartate--tRNA ligase, cytoplasmic"/>
    <property type="match status" value="1"/>
</dbReference>
<dbReference type="FunFam" id="3.30.930.10:FF:000013">
    <property type="entry name" value="Aspartate--tRNA ligase, cytoplasmic"/>
    <property type="match status" value="1"/>
</dbReference>
<dbReference type="Gene3D" id="3.30.930.10">
    <property type="entry name" value="Bira Bifunctional Protein, Domain 2"/>
    <property type="match status" value="1"/>
</dbReference>
<dbReference type="Gene3D" id="2.40.50.140">
    <property type="entry name" value="Nucleic acid-binding proteins"/>
    <property type="match status" value="1"/>
</dbReference>
<dbReference type="HAMAP" id="MF_02075">
    <property type="entry name" value="Asp_tRNA_synth_type2"/>
    <property type="match status" value="1"/>
</dbReference>
<dbReference type="InterPro" id="IPR004364">
    <property type="entry name" value="Aa-tRNA-synt_II"/>
</dbReference>
<dbReference type="InterPro" id="IPR006195">
    <property type="entry name" value="aa-tRNA-synth_II"/>
</dbReference>
<dbReference type="InterPro" id="IPR045864">
    <property type="entry name" value="aa-tRNA-synth_II/BPL/LPL"/>
</dbReference>
<dbReference type="InterPro" id="IPR004523">
    <property type="entry name" value="Asp-tRNA_synthase_2"/>
</dbReference>
<dbReference type="InterPro" id="IPR002312">
    <property type="entry name" value="Asp/Asn-tRNA-synth_IIb"/>
</dbReference>
<dbReference type="InterPro" id="IPR012340">
    <property type="entry name" value="NA-bd_OB-fold"/>
</dbReference>
<dbReference type="InterPro" id="IPR004365">
    <property type="entry name" value="NA-bd_OB_tRNA"/>
</dbReference>
<dbReference type="NCBIfam" id="TIGR00458">
    <property type="entry name" value="aspS_nondisc"/>
    <property type="match status" value="1"/>
</dbReference>
<dbReference type="NCBIfam" id="NF003483">
    <property type="entry name" value="PRK05159.1"/>
    <property type="match status" value="1"/>
</dbReference>
<dbReference type="PANTHER" id="PTHR43450:SF1">
    <property type="entry name" value="ASPARTATE--TRNA LIGASE, CYTOPLASMIC"/>
    <property type="match status" value="1"/>
</dbReference>
<dbReference type="PANTHER" id="PTHR43450">
    <property type="entry name" value="ASPARTYL-TRNA SYNTHETASE"/>
    <property type="match status" value="1"/>
</dbReference>
<dbReference type="Pfam" id="PF00152">
    <property type="entry name" value="tRNA-synt_2"/>
    <property type="match status" value="1"/>
</dbReference>
<dbReference type="Pfam" id="PF01336">
    <property type="entry name" value="tRNA_anti-codon"/>
    <property type="match status" value="1"/>
</dbReference>
<dbReference type="PRINTS" id="PR01042">
    <property type="entry name" value="TRNASYNTHASP"/>
</dbReference>
<dbReference type="SUPFAM" id="SSF55681">
    <property type="entry name" value="Class II aaRS and biotin synthetases"/>
    <property type="match status" value="1"/>
</dbReference>
<dbReference type="SUPFAM" id="SSF50249">
    <property type="entry name" value="Nucleic acid-binding proteins"/>
    <property type="match status" value="1"/>
</dbReference>
<dbReference type="PROSITE" id="PS50862">
    <property type="entry name" value="AA_TRNA_LIGASE_II"/>
    <property type="match status" value="1"/>
</dbReference>
<sequence>MPSTNASRKGQEKPREIVDAAEDYAKERYGISSMIQSQEKPDRVLVRVKDLTVQKADDVVWVRARVHTSRAKGKQCFLVLRQQQFNVQALVAVGDHASKQMVKFAANINKESIIDVEGVVRKVNQKIGSCTQQDVELHVQKIYVISLAEPRLPLQLDDAIRPEVEGEEDGRATVNQDTRLDNRVIDLRTSTSQAIFRLQSGICHLFRETLINKGFVEIQTPKIISAASEGGANVFTVSYFKNNAYLAQSPQLYKQMCICADFEKVFCIGPVFRAEDSNTHRHLTEFVGLDIEMAFNYHYHEVVEEIADTLVQIFKGLQERFQTEIQTVSKQFPCEPFKFLEPTLRLEYCEALAMLREAGVEMDDEEDLSTPNEKLLGRLVKEKYDTDFYVLDKYPLAVRPFYTMPDPRNPKQSNSYDMFMRGEEILSGAQRIHDPQLLTERALHHGIDLEKIKAYIDSFRFGAPPHAGGGIGLERVTMLFLGLHNVRQTSMFPRDPKRLTP</sequence>
<protein>
    <recommendedName>
        <fullName>Aspartate--tRNA ligase, cytoplasmic</fullName>
        <ecNumber evidence="3">6.1.1.12</ecNumber>
    </recommendedName>
    <alternativeName>
        <fullName>Aspartyl-tRNA synthetase</fullName>
        <shortName>AspRS</shortName>
    </alternativeName>
</protein>
<evidence type="ECO:0000250" key="1"/>
<evidence type="ECO:0000250" key="2">
    <source>
        <dbReference type="UniProtKB" id="P14868"/>
    </source>
</evidence>
<evidence type="ECO:0000250" key="3">
    <source>
        <dbReference type="UniProtKB" id="P15178"/>
    </source>
</evidence>
<evidence type="ECO:0000269" key="4">
    <source>
    </source>
</evidence>
<evidence type="ECO:0000305" key="5"/>
<organism>
    <name type="scientific">Mus musculus</name>
    <name type="common">Mouse</name>
    <dbReference type="NCBI Taxonomy" id="10090"/>
    <lineage>
        <taxon>Eukaryota</taxon>
        <taxon>Metazoa</taxon>
        <taxon>Chordata</taxon>
        <taxon>Craniata</taxon>
        <taxon>Vertebrata</taxon>
        <taxon>Euteleostomi</taxon>
        <taxon>Mammalia</taxon>
        <taxon>Eutheria</taxon>
        <taxon>Euarchontoglires</taxon>
        <taxon>Glires</taxon>
        <taxon>Rodentia</taxon>
        <taxon>Myomorpha</taxon>
        <taxon>Muroidea</taxon>
        <taxon>Muridae</taxon>
        <taxon>Murinae</taxon>
        <taxon>Mus</taxon>
        <taxon>Mus</taxon>
    </lineage>
</organism>
<reference key="1">
    <citation type="journal article" date="2005" name="Science">
        <title>The transcriptional landscape of the mammalian genome.</title>
        <authorList>
            <person name="Carninci P."/>
            <person name="Kasukawa T."/>
            <person name="Katayama S."/>
            <person name="Gough J."/>
            <person name="Frith M.C."/>
            <person name="Maeda N."/>
            <person name="Oyama R."/>
            <person name="Ravasi T."/>
            <person name="Lenhard B."/>
            <person name="Wells C."/>
            <person name="Kodzius R."/>
            <person name="Shimokawa K."/>
            <person name="Bajic V.B."/>
            <person name="Brenner S.E."/>
            <person name="Batalov S."/>
            <person name="Forrest A.R."/>
            <person name="Zavolan M."/>
            <person name="Davis M.J."/>
            <person name="Wilming L.G."/>
            <person name="Aidinis V."/>
            <person name="Allen J.E."/>
            <person name="Ambesi-Impiombato A."/>
            <person name="Apweiler R."/>
            <person name="Aturaliya R.N."/>
            <person name="Bailey T.L."/>
            <person name="Bansal M."/>
            <person name="Baxter L."/>
            <person name="Beisel K.W."/>
            <person name="Bersano T."/>
            <person name="Bono H."/>
            <person name="Chalk A.M."/>
            <person name="Chiu K.P."/>
            <person name="Choudhary V."/>
            <person name="Christoffels A."/>
            <person name="Clutterbuck D.R."/>
            <person name="Crowe M.L."/>
            <person name="Dalla E."/>
            <person name="Dalrymple B.P."/>
            <person name="de Bono B."/>
            <person name="Della Gatta G."/>
            <person name="di Bernardo D."/>
            <person name="Down T."/>
            <person name="Engstrom P."/>
            <person name="Fagiolini M."/>
            <person name="Faulkner G."/>
            <person name="Fletcher C.F."/>
            <person name="Fukushima T."/>
            <person name="Furuno M."/>
            <person name="Futaki S."/>
            <person name="Gariboldi M."/>
            <person name="Georgii-Hemming P."/>
            <person name="Gingeras T.R."/>
            <person name="Gojobori T."/>
            <person name="Green R.E."/>
            <person name="Gustincich S."/>
            <person name="Harbers M."/>
            <person name="Hayashi Y."/>
            <person name="Hensch T.K."/>
            <person name="Hirokawa N."/>
            <person name="Hill D."/>
            <person name="Huminiecki L."/>
            <person name="Iacono M."/>
            <person name="Ikeo K."/>
            <person name="Iwama A."/>
            <person name="Ishikawa T."/>
            <person name="Jakt M."/>
            <person name="Kanapin A."/>
            <person name="Katoh M."/>
            <person name="Kawasawa Y."/>
            <person name="Kelso J."/>
            <person name="Kitamura H."/>
            <person name="Kitano H."/>
            <person name="Kollias G."/>
            <person name="Krishnan S.P."/>
            <person name="Kruger A."/>
            <person name="Kummerfeld S.K."/>
            <person name="Kurochkin I.V."/>
            <person name="Lareau L.F."/>
            <person name="Lazarevic D."/>
            <person name="Lipovich L."/>
            <person name="Liu J."/>
            <person name="Liuni S."/>
            <person name="McWilliam S."/>
            <person name="Madan Babu M."/>
            <person name="Madera M."/>
            <person name="Marchionni L."/>
            <person name="Matsuda H."/>
            <person name="Matsuzawa S."/>
            <person name="Miki H."/>
            <person name="Mignone F."/>
            <person name="Miyake S."/>
            <person name="Morris K."/>
            <person name="Mottagui-Tabar S."/>
            <person name="Mulder N."/>
            <person name="Nakano N."/>
            <person name="Nakauchi H."/>
            <person name="Ng P."/>
            <person name="Nilsson R."/>
            <person name="Nishiguchi S."/>
            <person name="Nishikawa S."/>
            <person name="Nori F."/>
            <person name="Ohara O."/>
            <person name="Okazaki Y."/>
            <person name="Orlando V."/>
            <person name="Pang K.C."/>
            <person name="Pavan W.J."/>
            <person name="Pavesi G."/>
            <person name="Pesole G."/>
            <person name="Petrovsky N."/>
            <person name="Piazza S."/>
            <person name="Reed J."/>
            <person name="Reid J.F."/>
            <person name="Ring B.Z."/>
            <person name="Ringwald M."/>
            <person name="Rost B."/>
            <person name="Ruan Y."/>
            <person name="Salzberg S.L."/>
            <person name="Sandelin A."/>
            <person name="Schneider C."/>
            <person name="Schoenbach C."/>
            <person name="Sekiguchi K."/>
            <person name="Semple C.A."/>
            <person name="Seno S."/>
            <person name="Sessa L."/>
            <person name="Sheng Y."/>
            <person name="Shibata Y."/>
            <person name="Shimada H."/>
            <person name="Shimada K."/>
            <person name="Silva D."/>
            <person name="Sinclair B."/>
            <person name="Sperling S."/>
            <person name="Stupka E."/>
            <person name="Sugiura K."/>
            <person name="Sultana R."/>
            <person name="Takenaka Y."/>
            <person name="Taki K."/>
            <person name="Tammoja K."/>
            <person name="Tan S.L."/>
            <person name="Tang S."/>
            <person name="Taylor M.S."/>
            <person name="Tegner J."/>
            <person name="Teichmann S.A."/>
            <person name="Ueda H.R."/>
            <person name="van Nimwegen E."/>
            <person name="Verardo R."/>
            <person name="Wei C.L."/>
            <person name="Yagi K."/>
            <person name="Yamanishi H."/>
            <person name="Zabarovsky E."/>
            <person name="Zhu S."/>
            <person name="Zimmer A."/>
            <person name="Hide W."/>
            <person name="Bult C."/>
            <person name="Grimmond S.M."/>
            <person name="Teasdale R.D."/>
            <person name="Liu E.T."/>
            <person name="Brusic V."/>
            <person name="Quackenbush J."/>
            <person name="Wahlestedt C."/>
            <person name="Mattick J.S."/>
            <person name="Hume D.A."/>
            <person name="Kai C."/>
            <person name="Sasaki D."/>
            <person name="Tomaru Y."/>
            <person name="Fukuda S."/>
            <person name="Kanamori-Katayama M."/>
            <person name="Suzuki M."/>
            <person name="Aoki J."/>
            <person name="Arakawa T."/>
            <person name="Iida J."/>
            <person name="Imamura K."/>
            <person name="Itoh M."/>
            <person name="Kato T."/>
            <person name="Kawaji H."/>
            <person name="Kawagashira N."/>
            <person name="Kawashima T."/>
            <person name="Kojima M."/>
            <person name="Kondo S."/>
            <person name="Konno H."/>
            <person name="Nakano K."/>
            <person name="Ninomiya N."/>
            <person name="Nishio T."/>
            <person name="Okada M."/>
            <person name="Plessy C."/>
            <person name="Shibata K."/>
            <person name="Shiraki T."/>
            <person name="Suzuki S."/>
            <person name="Tagami M."/>
            <person name="Waki K."/>
            <person name="Watahiki A."/>
            <person name="Okamura-Oho Y."/>
            <person name="Suzuki H."/>
            <person name="Kawai J."/>
            <person name="Hayashizaki Y."/>
        </authorList>
    </citation>
    <scope>NUCLEOTIDE SEQUENCE [LARGE SCALE MRNA]</scope>
    <source>
        <strain>C57BL/6J</strain>
        <strain>NOD</strain>
        <tissue>Bone marrow</tissue>
        <tissue>Thymus</tissue>
    </source>
</reference>
<reference key="2">
    <citation type="journal article" date="2004" name="Genome Res.">
        <title>The status, quality, and expansion of the NIH full-length cDNA project: the Mammalian Gene Collection (MGC).</title>
        <authorList>
            <consortium name="The MGC Project Team"/>
        </authorList>
    </citation>
    <scope>NUCLEOTIDE SEQUENCE [LARGE SCALE MRNA]</scope>
</reference>
<reference key="3">
    <citation type="journal article" date="2002" name="Proc. Natl. Acad. Sci. U.S.A.">
        <title>p38 is essential for the assembly and stability of macromolecular tRNA synthetase complex: implications for its physiological significance.</title>
        <authorList>
            <person name="Kim J.Y."/>
            <person name="Kang Y.-S."/>
            <person name="Lee J.-W."/>
            <person name="Kim H.J."/>
            <person name="Ahn Y.H."/>
            <person name="Park H."/>
            <person name="Ko Y.-G."/>
            <person name="Kim S."/>
        </authorList>
    </citation>
    <scope>SUBUNIT</scope>
</reference>
<reference key="4">
    <citation type="journal article" date="2010" name="Cell">
        <title>A tissue-specific atlas of mouse protein phosphorylation and expression.</title>
        <authorList>
            <person name="Huttlin E.L."/>
            <person name="Jedrychowski M.P."/>
            <person name="Elias J.E."/>
            <person name="Goswami T."/>
            <person name="Rad R."/>
            <person name="Beausoleil S.A."/>
            <person name="Villen J."/>
            <person name="Haas W."/>
            <person name="Sowa M.E."/>
            <person name="Gygi S.P."/>
        </authorList>
    </citation>
    <scope>IDENTIFICATION BY MASS SPECTROMETRY [LARGE SCALE ANALYSIS]</scope>
    <source>
        <tissue>Brain</tissue>
        <tissue>Brown adipose tissue</tissue>
        <tissue>Heart</tissue>
        <tissue>Kidney</tissue>
        <tissue>Liver</tissue>
        <tissue>Lung</tissue>
        <tissue>Pancreas</tissue>
        <tissue>Spleen</tissue>
        <tissue>Testis</tissue>
    </source>
</reference>
<name>SYDC_MOUSE</name>
<proteinExistence type="evidence at protein level"/>
<comment type="function">
    <text evidence="3">Catalyzes the specific attachment of an amino acid to its cognate tRNA in a 2 step reaction: the amino acid (AA) is first activated by ATP to form AA-AMP and then transferred to the acceptor end of the tRNA.</text>
</comment>
<comment type="catalytic activity">
    <reaction evidence="3">
        <text>tRNA(Asp) + L-aspartate + ATP = L-aspartyl-tRNA(Asp) + AMP + diphosphate</text>
        <dbReference type="Rhea" id="RHEA:19649"/>
        <dbReference type="Rhea" id="RHEA-COMP:9660"/>
        <dbReference type="Rhea" id="RHEA-COMP:9678"/>
        <dbReference type="ChEBI" id="CHEBI:29991"/>
        <dbReference type="ChEBI" id="CHEBI:30616"/>
        <dbReference type="ChEBI" id="CHEBI:33019"/>
        <dbReference type="ChEBI" id="CHEBI:78442"/>
        <dbReference type="ChEBI" id="CHEBI:78516"/>
        <dbReference type="ChEBI" id="CHEBI:456215"/>
        <dbReference type="EC" id="6.1.1.12"/>
    </reaction>
</comment>
<comment type="subunit">
    <text evidence="2 4">Homodimer (By similarity). Part of a multisubunit complex that groups tRNA ligases for Arg (RARS1), Asp (DARS1), Gln (QARS1), Ile (IARS1), Leu (LARS1), Lys (KARS1), Met (MARS1) the bifunctional ligase for Glu and Pro (EPRS1) and the auxiliary subunits AIMP1/p43, AIMP2/p38 and EEF1E1/p18 (PubMed:12060739).</text>
</comment>
<comment type="subcellular location">
    <subcellularLocation>
        <location>Cytoplasm</location>
    </subcellularLocation>
</comment>
<comment type="similarity">
    <text evidence="5">Belongs to the class-II aminoacyl-tRNA synthetase family. Type 2 subfamily.</text>
</comment>
<feature type="chain" id="PRO_0000111011" description="Aspartate--tRNA ligase, cytoplasmic">
    <location>
        <begin position="1"/>
        <end position="501"/>
    </location>
</feature>
<feature type="region of interest" description="Aspartate" evidence="1">
    <location>
        <begin position="251"/>
        <end position="254"/>
    </location>
</feature>
<feature type="binding site" evidence="1">
    <location>
        <position position="229"/>
    </location>
    <ligand>
        <name>L-aspartate</name>
        <dbReference type="ChEBI" id="CHEBI:29991"/>
    </ligand>
</feature>
<feature type="binding site" evidence="1">
    <location>
        <begin position="273"/>
        <end position="275"/>
    </location>
    <ligand>
        <name>ATP</name>
        <dbReference type="ChEBI" id="CHEBI:30616"/>
    </ligand>
</feature>
<feature type="binding site" evidence="1">
    <location>
        <position position="273"/>
    </location>
    <ligand>
        <name>L-aspartate</name>
        <dbReference type="ChEBI" id="CHEBI:29991"/>
    </ligand>
</feature>
<feature type="binding site" evidence="1">
    <location>
        <begin position="281"/>
        <end position="283"/>
    </location>
    <ligand>
        <name>ATP</name>
        <dbReference type="ChEBI" id="CHEBI:30616"/>
    </ligand>
</feature>
<feature type="binding site" evidence="1">
    <location>
        <position position="424"/>
    </location>
    <ligand>
        <name>ATP</name>
        <dbReference type="ChEBI" id="CHEBI:30616"/>
    </ligand>
</feature>
<feature type="binding site" evidence="1">
    <location>
        <position position="427"/>
    </location>
    <ligand>
        <name>L-aspartate</name>
        <dbReference type="ChEBI" id="CHEBI:29991"/>
    </ligand>
</feature>
<feature type="binding site" evidence="1">
    <location>
        <position position="431"/>
    </location>
    <ligand>
        <name>L-aspartate</name>
        <dbReference type="ChEBI" id="CHEBI:29991"/>
    </ligand>
</feature>
<feature type="binding site" evidence="1">
    <location>
        <begin position="472"/>
        <end position="475"/>
    </location>
    <ligand>
        <name>ATP</name>
        <dbReference type="ChEBI" id="CHEBI:30616"/>
    </ligand>
</feature>
<feature type="modified residue" description="Phosphothreonine" evidence="2">
    <location>
        <position position="52"/>
    </location>
</feature>
<feature type="modified residue" description="N6-acetyllysine" evidence="2">
    <location>
        <position position="74"/>
    </location>
</feature>
<feature type="modified residue" description="Phosphoserine" evidence="2">
    <location>
        <position position="249"/>
    </location>
</feature>
<feature type="modified residue" description="N6-acetyllysine" evidence="2">
    <location>
        <position position="374"/>
    </location>
</feature>
<feature type="sequence conflict" description="In Ref. 2; AAH08638." evidence="5" ref="2">
    <original>T</original>
    <variation>A</variation>
    <location>
        <position position="4"/>
    </location>
</feature>
<accession>Q922B2</accession>
<accession>Q3U987</accession>